<keyword id="KW-0028">Amino-acid biosynthesis</keyword>
<keyword id="KW-0055">Arginine biosynthesis</keyword>
<keyword id="KW-0963">Cytoplasm</keyword>
<keyword id="KW-0456">Lyase</keyword>
<reference key="1">
    <citation type="journal article" date="2011" name="J. Bacteriol.">
        <title>Complete genome sequence of the Thermophilic Bacterium Exiguobacterium sp. AT1b.</title>
        <authorList>
            <person name="Vishnivetskaya T.A."/>
            <person name="Lucas S."/>
            <person name="Copeland A."/>
            <person name="Lapidus A."/>
            <person name="Glavina del Rio T."/>
            <person name="Dalin E."/>
            <person name="Tice H."/>
            <person name="Bruce D.C."/>
            <person name="Goodwin L.A."/>
            <person name="Pitluck S."/>
            <person name="Saunders E."/>
            <person name="Brettin T."/>
            <person name="Detter C."/>
            <person name="Han C."/>
            <person name="Larimer F."/>
            <person name="Land M.L."/>
            <person name="Hauser L.J."/>
            <person name="Kyrpides N.C."/>
            <person name="Ovchinnikova G."/>
            <person name="Kathariou S."/>
            <person name="Ramaley R.F."/>
            <person name="Rodrigues D.F."/>
            <person name="Hendrix C."/>
            <person name="Richardson P."/>
            <person name="Tiedje J.M."/>
        </authorList>
    </citation>
    <scope>NUCLEOTIDE SEQUENCE [LARGE SCALE GENOMIC DNA]</scope>
    <source>
        <strain>ATCC BAA-1283 / AT1b</strain>
    </source>
</reference>
<proteinExistence type="inferred from homology"/>
<evidence type="ECO:0000255" key="1">
    <source>
        <dbReference type="HAMAP-Rule" id="MF_00006"/>
    </source>
</evidence>
<sequence length="462" mass="52313">MSKLWGGRFEKTASDWVDAFGASIEFDAQLVLEDLEGSMAHVTMLGDQGILLKEEVTQILDGLQQLKQKALADELKFEVYHEDIHMNLEALLHEAIGPVAGKMHTARSRNDQVATDMHLYLKERVKEVIQLIESLQRELHAHASENVETIMPGYTHLQRAQPISLAHHLLAYFWMLERDKERFTDSLKRIDWSPLGAGALAGTTFPIDRSRSAELLGFNRVYPNSLDAVSDRDFILEFLSNASMLMMHLSRFCEELILWASEEYRFITVSDTFSTGSSMMPQKKNPDMAELVRGKSGRVIGNLMGLLTLMKGLPLAYNKDLQEDKEGMFDTVKTVQGSLSIMAGMMNELTFHPDVMKKATERDFSNATELADYLTAKGLPFREAHEVTGRLVKYCVDERLYLRELPITVFQTYSELIQEDVYHALTPEQAVARRNSYGGTGFDAVREQLKEASVCMSTMTYS</sequence>
<organism>
    <name type="scientific">Exiguobacterium sp. (strain ATCC BAA-1283 / AT1b)</name>
    <dbReference type="NCBI Taxonomy" id="360911"/>
    <lineage>
        <taxon>Bacteria</taxon>
        <taxon>Bacillati</taxon>
        <taxon>Bacillota</taxon>
        <taxon>Bacilli</taxon>
        <taxon>Bacillales</taxon>
        <taxon>Bacillales Family XII. Incertae Sedis</taxon>
        <taxon>Exiguobacterium</taxon>
    </lineage>
</organism>
<protein>
    <recommendedName>
        <fullName evidence="1">Argininosuccinate lyase</fullName>
        <shortName evidence="1">ASAL</shortName>
        <ecNumber evidence="1">4.3.2.1</ecNumber>
    </recommendedName>
    <alternativeName>
        <fullName evidence="1">Arginosuccinase</fullName>
    </alternativeName>
</protein>
<accession>C4L2P3</accession>
<feature type="chain" id="PRO_1000201699" description="Argininosuccinate lyase">
    <location>
        <begin position="1"/>
        <end position="462"/>
    </location>
</feature>
<dbReference type="EC" id="4.3.2.1" evidence="1"/>
<dbReference type="EMBL" id="CP001615">
    <property type="protein sequence ID" value="ACQ69301.1"/>
    <property type="molecule type" value="Genomic_DNA"/>
</dbReference>
<dbReference type="RefSeq" id="WP_012726420.1">
    <property type="nucleotide sequence ID" value="NC_012673.1"/>
</dbReference>
<dbReference type="SMR" id="C4L2P3"/>
<dbReference type="STRING" id="360911.EAT1b_0369"/>
<dbReference type="KEGG" id="eat:EAT1b_0369"/>
<dbReference type="eggNOG" id="COG0165">
    <property type="taxonomic scope" value="Bacteria"/>
</dbReference>
<dbReference type="HOGENOM" id="CLU_027272_2_3_9"/>
<dbReference type="OrthoDB" id="9769623at2"/>
<dbReference type="UniPathway" id="UPA00068">
    <property type="reaction ID" value="UER00114"/>
</dbReference>
<dbReference type="Proteomes" id="UP000000716">
    <property type="component" value="Chromosome"/>
</dbReference>
<dbReference type="GO" id="GO:0005829">
    <property type="term" value="C:cytosol"/>
    <property type="evidence" value="ECO:0007669"/>
    <property type="project" value="TreeGrafter"/>
</dbReference>
<dbReference type="GO" id="GO:0004056">
    <property type="term" value="F:argininosuccinate lyase activity"/>
    <property type="evidence" value="ECO:0007669"/>
    <property type="project" value="UniProtKB-UniRule"/>
</dbReference>
<dbReference type="GO" id="GO:0042450">
    <property type="term" value="P:arginine biosynthetic process via ornithine"/>
    <property type="evidence" value="ECO:0007669"/>
    <property type="project" value="InterPro"/>
</dbReference>
<dbReference type="GO" id="GO:0006526">
    <property type="term" value="P:L-arginine biosynthetic process"/>
    <property type="evidence" value="ECO:0007669"/>
    <property type="project" value="UniProtKB-UniRule"/>
</dbReference>
<dbReference type="CDD" id="cd01359">
    <property type="entry name" value="Argininosuccinate_lyase"/>
    <property type="match status" value="1"/>
</dbReference>
<dbReference type="FunFam" id="1.10.40.30:FF:000001">
    <property type="entry name" value="Argininosuccinate lyase"/>
    <property type="match status" value="1"/>
</dbReference>
<dbReference type="FunFam" id="1.20.200.10:FF:000002">
    <property type="entry name" value="Argininosuccinate lyase"/>
    <property type="match status" value="1"/>
</dbReference>
<dbReference type="Gene3D" id="1.10.40.30">
    <property type="entry name" value="Fumarase/aspartase (C-terminal domain)"/>
    <property type="match status" value="1"/>
</dbReference>
<dbReference type="Gene3D" id="1.20.200.10">
    <property type="entry name" value="Fumarase/aspartase (Central domain)"/>
    <property type="match status" value="1"/>
</dbReference>
<dbReference type="Gene3D" id="1.10.275.10">
    <property type="entry name" value="Fumarase/aspartase (N-terminal domain)"/>
    <property type="match status" value="1"/>
</dbReference>
<dbReference type="HAMAP" id="MF_00006">
    <property type="entry name" value="Arg_succ_lyase"/>
    <property type="match status" value="1"/>
</dbReference>
<dbReference type="InterPro" id="IPR029419">
    <property type="entry name" value="Arg_succ_lyase_C"/>
</dbReference>
<dbReference type="InterPro" id="IPR009049">
    <property type="entry name" value="Argininosuccinate_lyase"/>
</dbReference>
<dbReference type="InterPro" id="IPR024083">
    <property type="entry name" value="Fumarase/histidase_N"/>
</dbReference>
<dbReference type="InterPro" id="IPR020557">
    <property type="entry name" value="Fumarate_lyase_CS"/>
</dbReference>
<dbReference type="InterPro" id="IPR000362">
    <property type="entry name" value="Fumarate_lyase_fam"/>
</dbReference>
<dbReference type="InterPro" id="IPR022761">
    <property type="entry name" value="Fumarate_lyase_N"/>
</dbReference>
<dbReference type="InterPro" id="IPR008948">
    <property type="entry name" value="L-Aspartase-like"/>
</dbReference>
<dbReference type="NCBIfam" id="TIGR00838">
    <property type="entry name" value="argH"/>
    <property type="match status" value="1"/>
</dbReference>
<dbReference type="PANTHER" id="PTHR43814">
    <property type="entry name" value="ARGININOSUCCINATE LYASE"/>
    <property type="match status" value="1"/>
</dbReference>
<dbReference type="PANTHER" id="PTHR43814:SF1">
    <property type="entry name" value="ARGININOSUCCINATE LYASE"/>
    <property type="match status" value="1"/>
</dbReference>
<dbReference type="Pfam" id="PF14698">
    <property type="entry name" value="ASL_C2"/>
    <property type="match status" value="1"/>
</dbReference>
<dbReference type="Pfam" id="PF00206">
    <property type="entry name" value="Lyase_1"/>
    <property type="match status" value="1"/>
</dbReference>
<dbReference type="PRINTS" id="PR00145">
    <property type="entry name" value="ARGSUCLYASE"/>
</dbReference>
<dbReference type="PRINTS" id="PR00149">
    <property type="entry name" value="FUMRATELYASE"/>
</dbReference>
<dbReference type="SUPFAM" id="SSF48557">
    <property type="entry name" value="L-aspartase-like"/>
    <property type="match status" value="1"/>
</dbReference>
<dbReference type="PROSITE" id="PS00163">
    <property type="entry name" value="FUMARATE_LYASES"/>
    <property type="match status" value="1"/>
</dbReference>
<comment type="catalytic activity">
    <reaction evidence="1">
        <text>2-(N(omega)-L-arginino)succinate = fumarate + L-arginine</text>
        <dbReference type="Rhea" id="RHEA:24020"/>
        <dbReference type="ChEBI" id="CHEBI:29806"/>
        <dbReference type="ChEBI" id="CHEBI:32682"/>
        <dbReference type="ChEBI" id="CHEBI:57472"/>
        <dbReference type="EC" id="4.3.2.1"/>
    </reaction>
</comment>
<comment type="pathway">
    <text evidence="1">Amino-acid biosynthesis; L-arginine biosynthesis; L-arginine from L-ornithine and carbamoyl phosphate: step 3/3.</text>
</comment>
<comment type="subcellular location">
    <subcellularLocation>
        <location evidence="1">Cytoplasm</location>
    </subcellularLocation>
</comment>
<comment type="similarity">
    <text evidence="1">Belongs to the lyase 1 family. Argininosuccinate lyase subfamily.</text>
</comment>
<gene>
    <name evidence="1" type="primary">argH</name>
    <name type="ordered locus">EAT1b_0369</name>
</gene>
<name>ARLY_EXISA</name>